<protein>
    <recommendedName>
        <fullName>NF-kappa-B inhibitor-interacting Ras-like protein 2</fullName>
    </recommendedName>
    <alternativeName>
        <fullName>I-kappa-B-interacting Ras-like protein 2</fullName>
        <shortName>Kappa B-Ras protein 2</shortName>
        <shortName>KappaB-Ras2</shortName>
    </alternativeName>
</protein>
<sequence length="191" mass="21503">MGKSCKVVVCGQAAVGKTAILEQLLYGNHVVGSEMIETQEDIYVGSIETDRGVREQVRFYDTRGLRDGLELPKHCFSCTDGYVLVYSTDSKESFRRVELLKKEIDKCKDKKEVTIVVLGNKCDLQEQRRVDHDAAQHWAKGEKVKLWEVSVADRRTLIEPFIYLASKMTQPQSKSAFPLSRKNKGSGSVDG</sequence>
<accession>Q5ZJW6</accession>
<gene>
    <name type="primary">NKIRAS2</name>
    <name type="ORF">RCJMB04_15a13</name>
</gene>
<reference key="1">
    <citation type="journal article" date="2005" name="Genome Biol.">
        <title>Full-length cDNAs from chicken bursal lymphocytes to facilitate gene function analysis.</title>
        <authorList>
            <person name="Caldwell R.B."/>
            <person name="Kierzek A.M."/>
            <person name="Arakawa H."/>
            <person name="Bezzubov Y."/>
            <person name="Zaim J."/>
            <person name="Fiedler P."/>
            <person name="Kutter S."/>
            <person name="Blagodatski A."/>
            <person name="Kostovska D."/>
            <person name="Koter M."/>
            <person name="Plachy J."/>
            <person name="Carninci P."/>
            <person name="Hayashizaki Y."/>
            <person name="Buerstedde J.-M."/>
        </authorList>
    </citation>
    <scope>NUCLEOTIDE SEQUENCE [LARGE SCALE MRNA]</scope>
    <source>
        <strain>CB</strain>
        <tissue>Bursa of Fabricius</tissue>
    </source>
</reference>
<name>KBRS2_CHICK</name>
<evidence type="ECO:0000250" key="1"/>
<evidence type="ECO:0000256" key="2">
    <source>
        <dbReference type="SAM" id="MobiDB-lite"/>
    </source>
</evidence>
<evidence type="ECO:0000305" key="3"/>
<comment type="function">
    <text evidence="1">Atypical Ras-like protein that acts as a potent regulator of NF-kappa-B activity by preventing the degradation of NF-kappa-B inhibitor beta (NFKBIB) by most signals, explaining why NFKBIB is more resistant to degradation.</text>
</comment>
<comment type="subcellular location">
    <subcellularLocation>
        <location evidence="1">Cytoplasm</location>
    </subcellularLocation>
</comment>
<comment type="domain">
    <text>In contrast to other members of the Ras family, the members of the KappaB-Ras subfamily do not contain the conserved Gly and Gln residues in positions 13 and 65, which are replaced by Ala and Leu residues, respectively, and are therefore similar to the constitutively active forms of oncogenic forms of Ras. This suggests that members of this family are clearly different from other small GTPases proteins.</text>
</comment>
<comment type="similarity">
    <text evidence="3">Belongs to the small GTPase superfamily. Ras family. KappaB-Ras subfamily.</text>
</comment>
<feature type="chain" id="PRO_0000225681" description="NF-kappa-B inhibitor-interacting Ras-like protein 2">
    <location>
        <begin position="1"/>
        <end position="191"/>
    </location>
</feature>
<feature type="region of interest" description="Small GTPase-like">
    <location>
        <begin position="1"/>
        <end position="191"/>
    </location>
</feature>
<feature type="region of interest" description="Disordered" evidence="2">
    <location>
        <begin position="170"/>
        <end position="191"/>
    </location>
</feature>
<feature type="short sequence motif" description="Effector region">
    <location>
        <begin position="35"/>
        <end position="43"/>
    </location>
</feature>
<feature type="binding site" evidence="1">
    <location>
        <begin position="11"/>
        <end position="18"/>
    </location>
    <ligand>
        <name>GTP</name>
        <dbReference type="ChEBI" id="CHEBI:37565"/>
    </ligand>
</feature>
<feature type="binding site" evidence="1">
    <location>
        <begin position="61"/>
        <end position="65"/>
    </location>
    <ligand>
        <name>GTP</name>
        <dbReference type="ChEBI" id="CHEBI:37565"/>
    </ligand>
</feature>
<feature type="binding site" evidence="1">
    <location>
        <begin position="120"/>
        <end position="123"/>
    </location>
    <ligand>
        <name>GTP</name>
        <dbReference type="ChEBI" id="CHEBI:37565"/>
    </ligand>
</feature>
<organism>
    <name type="scientific">Gallus gallus</name>
    <name type="common">Chicken</name>
    <dbReference type="NCBI Taxonomy" id="9031"/>
    <lineage>
        <taxon>Eukaryota</taxon>
        <taxon>Metazoa</taxon>
        <taxon>Chordata</taxon>
        <taxon>Craniata</taxon>
        <taxon>Vertebrata</taxon>
        <taxon>Euteleostomi</taxon>
        <taxon>Archelosauria</taxon>
        <taxon>Archosauria</taxon>
        <taxon>Dinosauria</taxon>
        <taxon>Saurischia</taxon>
        <taxon>Theropoda</taxon>
        <taxon>Coelurosauria</taxon>
        <taxon>Aves</taxon>
        <taxon>Neognathae</taxon>
        <taxon>Galloanserae</taxon>
        <taxon>Galliformes</taxon>
        <taxon>Phasianidae</taxon>
        <taxon>Phasianinae</taxon>
        <taxon>Gallus</taxon>
    </lineage>
</organism>
<keyword id="KW-0963">Cytoplasm</keyword>
<keyword id="KW-0342">GTP-binding</keyword>
<keyword id="KW-0547">Nucleotide-binding</keyword>
<keyword id="KW-1185">Reference proteome</keyword>
<proteinExistence type="evidence at transcript level"/>
<dbReference type="EMBL" id="AJ720318">
    <property type="protein sequence ID" value="CAG31977.1"/>
    <property type="molecule type" value="mRNA"/>
</dbReference>
<dbReference type="RefSeq" id="NP_001006333.1">
    <property type="nucleotide sequence ID" value="NM_001006333.2"/>
</dbReference>
<dbReference type="SMR" id="Q5ZJW6"/>
<dbReference type="FunCoup" id="Q5ZJW6">
    <property type="interactions" value="1274"/>
</dbReference>
<dbReference type="STRING" id="9031.ENSGALP00000041419"/>
<dbReference type="PaxDb" id="9031-ENSGALP00000041419"/>
<dbReference type="Ensembl" id="ENSGALT00010056453.1">
    <property type="protein sequence ID" value="ENSGALP00010034196.1"/>
    <property type="gene ID" value="ENSGALG00010023164.1"/>
</dbReference>
<dbReference type="GeneID" id="420032"/>
<dbReference type="KEGG" id="gga:420032"/>
<dbReference type="CTD" id="28511"/>
<dbReference type="VEuPathDB" id="HostDB:geneid_420032"/>
<dbReference type="eggNOG" id="KOG3883">
    <property type="taxonomic scope" value="Eukaryota"/>
</dbReference>
<dbReference type="GeneTree" id="ENSGT00940000157943"/>
<dbReference type="HOGENOM" id="CLU_041217_17_1_1"/>
<dbReference type="InParanoid" id="Q5ZJW6"/>
<dbReference type="OMA" id="IMDRANN"/>
<dbReference type="OrthoDB" id="10002389at2759"/>
<dbReference type="PhylomeDB" id="Q5ZJW6"/>
<dbReference type="TreeFam" id="TF314483"/>
<dbReference type="PRO" id="PR:Q5ZJW6"/>
<dbReference type="Proteomes" id="UP000000539">
    <property type="component" value="Chromosome 27"/>
</dbReference>
<dbReference type="Bgee" id="ENSGALG00000028971">
    <property type="expression patterns" value="Expressed in granulocyte and 13 other cell types or tissues"/>
</dbReference>
<dbReference type="GO" id="GO:0005737">
    <property type="term" value="C:cytoplasm"/>
    <property type="evidence" value="ECO:0007669"/>
    <property type="project" value="UniProtKB-SubCell"/>
</dbReference>
<dbReference type="GO" id="GO:0005525">
    <property type="term" value="F:GTP binding"/>
    <property type="evidence" value="ECO:0007669"/>
    <property type="project" value="UniProtKB-KW"/>
</dbReference>
<dbReference type="GO" id="GO:0032794">
    <property type="term" value="F:GTPase activating protein binding"/>
    <property type="evidence" value="ECO:0000318"/>
    <property type="project" value="GO_Central"/>
</dbReference>
<dbReference type="GO" id="GO:0003924">
    <property type="term" value="F:GTPase activity"/>
    <property type="evidence" value="ECO:0007669"/>
    <property type="project" value="InterPro"/>
</dbReference>
<dbReference type="GO" id="GO:0006954">
    <property type="term" value="P:inflammatory response"/>
    <property type="evidence" value="ECO:0007669"/>
    <property type="project" value="Ensembl"/>
</dbReference>
<dbReference type="GO" id="GO:0043124">
    <property type="term" value="P:negative regulation of canonical NF-kappaB signal transduction"/>
    <property type="evidence" value="ECO:0007669"/>
    <property type="project" value="InterPro"/>
</dbReference>
<dbReference type="GO" id="GO:0032484">
    <property type="term" value="P:Ral protein signal transduction"/>
    <property type="evidence" value="ECO:0000318"/>
    <property type="project" value="GO_Central"/>
</dbReference>
<dbReference type="GO" id="GO:0010803">
    <property type="term" value="P:regulation of tumor necrosis factor-mediated signaling pathway"/>
    <property type="evidence" value="ECO:0007669"/>
    <property type="project" value="Ensembl"/>
</dbReference>
<dbReference type="GO" id="GO:0043129">
    <property type="term" value="P:surfactant homeostasis"/>
    <property type="evidence" value="ECO:0007669"/>
    <property type="project" value="Ensembl"/>
</dbReference>
<dbReference type="Gene3D" id="3.40.50.300">
    <property type="entry name" value="P-loop containing nucleotide triphosphate hydrolases"/>
    <property type="match status" value="1"/>
</dbReference>
<dbReference type="InterPro" id="IPR042227">
    <property type="entry name" value="KBRS"/>
</dbReference>
<dbReference type="InterPro" id="IPR027417">
    <property type="entry name" value="P-loop_NTPase"/>
</dbReference>
<dbReference type="InterPro" id="IPR005225">
    <property type="entry name" value="Small_GTP-bd"/>
</dbReference>
<dbReference type="InterPro" id="IPR001806">
    <property type="entry name" value="Small_GTPase"/>
</dbReference>
<dbReference type="NCBIfam" id="TIGR00231">
    <property type="entry name" value="small_GTP"/>
    <property type="match status" value="1"/>
</dbReference>
<dbReference type="PANTHER" id="PTHR46152">
    <property type="entry name" value="NF-KAPPA-B INHIBITOR-INTERACTING RAS-LIKE PROTEIN"/>
    <property type="match status" value="1"/>
</dbReference>
<dbReference type="PANTHER" id="PTHR46152:SF2">
    <property type="entry name" value="NF-KAPPA-B INHIBITOR-INTERACTING RAS-LIKE PROTEIN 2"/>
    <property type="match status" value="1"/>
</dbReference>
<dbReference type="Pfam" id="PF00071">
    <property type="entry name" value="Ras"/>
    <property type="match status" value="1"/>
</dbReference>
<dbReference type="PRINTS" id="PR00449">
    <property type="entry name" value="RASTRNSFRMNG"/>
</dbReference>
<dbReference type="SMART" id="SM00175">
    <property type="entry name" value="RAB"/>
    <property type="match status" value="1"/>
</dbReference>
<dbReference type="SMART" id="SM00173">
    <property type="entry name" value="RAS"/>
    <property type="match status" value="1"/>
</dbReference>
<dbReference type="SUPFAM" id="SSF52540">
    <property type="entry name" value="P-loop containing nucleoside triphosphate hydrolases"/>
    <property type="match status" value="1"/>
</dbReference>
<dbReference type="PROSITE" id="PS51419">
    <property type="entry name" value="RAB"/>
    <property type="match status" value="1"/>
</dbReference>